<name>NUOI_XANOM</name>
<keyword id="KW-0004">4Fe-4S</keyword>
<keyword id="KW-0997">Cell inner membrane</keyword>
<keyword id="KW-1003">Cell membrane</keyword>
<keyword id="KW-0408">Iron</keyword>
<keyword id="KW-0411">Iron-sulfur</keyword>
<keyword id="KW-0472">Membrane</keyword>
<keyword id="KW-0479">Metal-binding</keyword>
<keyword id="KW-0520">NAD</keyword>
<keyword id="KW-0874">Quinone</keyword>
<keyword id="KW-0677">Repeat</keyword>
<keyword id="KW-1278">Translocase</keyword>
<keyword id="KW-0830">Ubiquinone</keyword>
<gene>
    <name evidence="1" type="primary">nuoI</name>
    <name type="ordered locus">XOO3059</name>
</gene>
<evidence type="ECO:0000255" key="1">
    <source>
        <dbReference type="HAMAP-Rule" id="MF_01351"/>
    </source>
</evidence>
<proteinExistence type="inferred from homology"/>
<organism>
    <name type="scientific">Xanthomonas oryzae pv. oryzae (strain MAFF 311018)</name>
    <dbReference type="NCBI Taxonomy" id="342109"/>
    <lineage>
        <taxon>Bacteria</taxon>
        <taxon>Pseudomonadati</taxon>
        <taxon>Pseudomonadota</taxon>
        <taxon>Gammaproteobacteria</taxon>
        <taxon>Lysobacterales</taxon>
        <taxon>Lysobacteraceae</taxon>
        <taxon>Xanthomonas</taxon>
    </lineage>
</organism>
<sequence>MNKITHYFKSLLLLELLGGLWLTLKYTFKPKYTVLYPMEKFPQSPRFRGLHALRRYPNGEERCIACKLCEAVCPALAITIDSAKREDGTRRTTRYDIDLFKCIFCGFCEESCPVDSIVETHILEYHFEKRGENIINKPQLLAIGDRLETEIAERRAADAAFR</sequence>
<protein>
    <recommendedName>
        <fullName evidence="1">NADH-quinone oxidoreductase subunit I</fullName>
        <ecNumber evidence="1">7.1.1.-</ecNumber>
    </recommendedName>
    <alternativeName>
        <fullName evidence="1">NADH dehydrogenase I subunit I</fullName>
    </alternativeName>
    <alternativeName>
        <fullName evidence="1">NDH-1 subunit I</fullName>
    </alternativeName>
</protein>
<comment type="function">
    <text evidence="1">NDH-1 shuttles electrons from NADH, via FMN and iron-sulfur (Fe-S) centers, to quinones in the respiratory chain. The immediate electron acceptor for the enzyme in this species is believed to be ubiquinone. Couples the redox reaction to proton translocation (for every two electrons transferred, four hydrogen ions are translocated across the cytoplasmic membrane), and thus conserves the redox energy in a proton gradient.</text>
</comment>
<comment type="catalytic activity">
    <reaction evidence="1">
        <text>a quinone + NADH + 5 H(+)(in) = a quinol + NAD(+) + 4 H(+)(out)</text>
        <dbReference type="Rhea" id="RHEA:57888"/>
        <dbReference type="ChEBI" id="CHEBI:15378"/>
        <dbReference type="ChEBI" id="CHEBI:24646"/>
        <dbReference type="ChEBI" id="CHEBI:57540"/>
        <dbReference type="ChEBI" id="CHEBI:57945"/>
        <dbReference type="ChEBI" id="CHEBI:132124"/>
    </reaction>
</comment>
<comment type="cofactor">
    <cofactor evidence="1">
        <name>[4Fe-4S] cluster</name>
        <dbReference type="ChEBI" id="CHEBI:49883"/>
    </cofactor>
    <text evidence="1">Binds 2 [4Fe-4S] clusters per subunit.</text>
</comment>
<comment type="subunit">
    <text evidence="1">NDH-1 is composed of 14 different subunits. Subunits NuoA, H, J, K, L, M, N constitute the membrane sector of the complex.</text>
</comment>
<comment type="subcellular location">
    <subcellularLocation>
        <location evidence="1">Cell inner membrane</location>
        <topology evidence="1">Peripheral membrane protein</topology>
    </subcellularLocation>
</comment>
<comment type="similarity">
    <text evidence="1">Belongs to the complex I 23 kDa subunit family.</text>
</comment>
<accession>Q2P0W3</accession>
<feature type="chain" id="PRO_0000250955" description="NADH-quinone oxidoreductase subunit I">
    <location>
        <begin position="1"/>
        <end position="162"/>
    </location>
</feature>
<feature type="domain" description="4Fe-4S ferredoxin-type 1" evidence="1">
    <location>
        <begin position="53"/>
        <end position="83"/>
    </location>
</feature>
<feature type="domain" description="4Fe-4S ferredoxin-type 2" evidence="1">
    <location>
        <begin position="93"/>
        <end position="122"/>
    </location>
</feature>
<feature type="binding site" evidence="1">
    <location>
        <position position="63"/>
    </location>
    <ligand>
        <name>[4Fe-4S] cluster</name>
        <dbReference type="ChEBI" id="CHEBI:49883"/>
        <label>1</label>
    </ligand>
</feature>
<feature type="binding site" evidence="1">
    <location>
        <position position="66"/>
    </location>
    <ligand>
        <name>[4Fe-4S] cluster</name>
        <dbReference type="ChEBI" id="CHEBI:49883"/>
        <label>1</label>
    </ligand>
</feature>
<feature type="binding site" evidence="1">
    <location>
        <position position="69"/>
    </location>
    <ligand>
        <name>[4Fe-4S] cluster</name>
        <dbReference type="ChEBI" id="CHEBI:49883"/>
        <label>1</label>
    </ligand>
</feature>
<feature type="binding site" evidence="1">
    <location>
        <position position="73"/>
    </location>
    <ligand>
        <name>[4Fe-4S] cluster</name>
        <dbReference type="ChEBI" id="CHEBI:49883"/>
        <label>2</label>
    </ligand>
</feature>
<feature type="binding site" evidence="1">
    <location>
        <position position="102"/>
    </location>
    <ligand>
        <name>[4Fe-4S] cluster</name>
        <dbReference type="ChEBI" id="CHEBI:49883"/>
        <label>2</label>
    </ligand>
</feature>
<feature type="binding site" evidence="1">
    <location>
        <position position="105"/>
    </location>
    <ligand>
        <name>[4Fe-4S] cluster</name>
        <dbReference type="ChEBI" id="CHEBI:49883"/>
        <label>2</label>
    </ligand>
</feature>
<feature type="binding site" evidence="1">
    <location>
        <position position="108"/>
    </location>
    <ligand>
        <name>[4Fe-4S] cluster</name>
        <dbReference type="ChEBI" id="CHEBI:49883"/>
        <label>2</label>
    </ligand>
</feature>
<feature type="binding site" evidence="1">
    <location>
        <position position="112"/>
    </location>
    <ligand>
        <name>[4Fe-4S] cluster</name>
        <dbReference type="ChEBI" id="CHEBI:49883"/>
        <label>1</label>
    </ligand>
</feature>
<dbReference type="EC" id="7.1.1.-" evidence="1"/>
<dbReference type="EMBL" id="AP008229">
    <property type="protein sequence ID" value="BAE69814.1"/>
    <property type="molecule type" value="Genomic_DNA"/>
</dbReference>
<dbReference type="RefSeq" id="WP_011409057.1">
    <property type="nucleotide sequence ID" value="NC_007705.1"/>
</dbReference>
<dbReference type="SMR" id="Q2P0W3"/>
<dbReference type="KEGG" id="xom:XOO3059"/>
<dbReference type="HOGENOM" id="CLU_067218_5_1_6"/>
<dbReference type="GO" id="GO:0005886">
    <property type="term" value="C:plasma membrane"/>
    <property type="evidence" value="ECO:0007669"/>
    <property type="project" value="UniProtKB-SubCell"/>
</dbReference>
<dbReference type="GO" id="GO:0051539">
    <property type="term" value="F:4 iron, 4 sulfur cluster binding"/>
    <property type="evidence" value="ECO:0007669"/>
    <property type="project" value="UniProtKB-KW"/>
</dbReference>
<dbReference type="GO" id="GO:0005506">
    <property type="term" value="F:iron ion binding"/>
    <property type="evidence" value="ECO:0007669"/>
    <property type="project" value="UniProtKB-UniRule"/>
</dbReference>
<dbReference type="GO" id="GO:0050136">
    <property type="term" value="F:NADH:ubiquinone reductase (non-electrogenic) activity"/>
    <property type="evidence" value="ECO:0007669"/>
    <property type="project" value="UniProtKB-UniRule"/>
</dbReference>
<dbReference type="GO" id="GO:0048038">
    <property type="term" value="F:quinone binding"/>
    <property type="evidence" value="ECO:0007669"/>
    <property type="project" value="UniProtKB-KW"/>
</dbReference>
<dbReference type="GO" id="GO:0009060">
    <property type="term" value="P:aerobic respiration"/>
    <property type="evidence" value="ECO:0007669"/>
    <property type="project" value="TreeGrafter"/>
</dbReference>
<dbReference type="FunFam" id="3.30.70.3270:FF:000003">
    <property type="entry name" value="NADH-quinone oxidoreductase subunit I"/>
    <property type="match status" value="1"/>
</dbReference>
<dbReference type="Gene3D" id="3.30.70.3270">
    <property type="match status" value="1"/>
</dbReference>
<dbReference type="HAMAP" id="MF_01351">
    <property type="entry name" value="NDH1_NuoI"/>
    <property type="match status" value="1"/>
</dbReference>
<dbReference type="InterPro" id="IPR017896">
    <property type="entry name" value="4Fe4S_Fe-S-bd"/>
</dbReference>
<dbReference type="InterPro" id="IPR017900">
    <property type="entry name" value="4Fe4S_Fe_S_CS"/>
</dbReference>
<dbReference type="InterPro" id="IPR010226">
    <property type="entry name" value="NADH_quinone_OxRdtase_chainI"/>
</dbReference>
<dbReference type="NCBIfam" id="TIGR01971">
    <property type="entry name" value="NuoI"/>
    <property type="match status" value="1"/>
</dbReference>
<dbReference type="NCBIfam" id="NF004538">
    <property type="entry name" value="PRK05888.1-4"/>
    <property type="match status" value="1"/>
</dbReference>
<dbReference type="NCBIfam" id="NF004539">
    <property type="entry name" value="PRK05888.1-5"/>
    <property type="match status" value="1"/>
</dbReference>
<dbReference type="PANTHER" id="PTHR10849:SF20">
    <property type="entry name" value="NADH DEHYDROGENASE [UBIQUINONE] IRON-SULFUR PROTEIN 8, MITOCHONDRIAL"/>
    <property type="match status" value="1"/>
</dbReference>
<dbReference type="PANTHER" id="PTHR10849">
    <property type="entry name" value="NADH DEHYDROGENASE UBIQUINONE IRON-SULFUR PROTEIN 8, MITOCHONDRIAL"/>
    <property type="match status" value="1"/>
</dbReference>
<dbReference type="Pfam" id="PF12838">
    <property type="entry name" value="Fer4_7"/>
    <property type="match status" value="1"/>
</dbReference>
<dbReference type="SUPFAM" id="SSF54862">
    <property type="entry name" value="4Fe-4S ferredoxins"/>
    <property type="match status" value="1"/>
</dbReference>
<dbReference type="PROSITE" id="PS00198">
    <property type="entry name" value="4FE4S_FER_1"/>
    <property type="match status" value="2"/>
</dbReference>
<dbReference type="PROSITE" id="PS51379">
    <property type="entry name" value="4FE4S_FER_2"/>
    <property type="match status" value="2"/>
</dbReference>
<reference key="1">
    <citation type="journal article" date="2005" name="Jpn. Agric. Res. Q.">
        <title>Genome sequence of Xanthomonas oryzae pv. oryzae suggests contribution of large numbers of effector genes and insertion sequences to its race diversity.</title>
        <authorList>
            <person name="Ochiai H."/>
            <person name="Inoue Y."/>
            <person name="Takeya M."/>
            <person name="Sasaki A."/>
            <person name="Kaku H."/>
        </authorList>
    </citation>
    <scope>NUCLEOTIDE SEQUENCE [LARGE SCALE GENOMIC DNA]</scope>
    <source>
        <strain>MAFF 311018</strain>
    </source>
</reference>